<geneLocation type="chloroplast"/>
<name>ATPH_FAGEA</name>
<reference key="1">
    <citation type="journal article" date="2008" name="BMC Plant Biol.">
        <title>Comparative chloroplast genomics and phylogenetics of Fagopyrum esculentum ssp. ancestrale - a wild ancestor of cultivated buckwheat.</title>
        <authorList>
            <person name="Logacheva M.D."/>
            <person name="Samigullin T.H."/>
            <person name="Dhingra A."/>
            <person name="Penin A.A."/>
        </authorList>
    </citation>
    <scope>NUCLEOTIDE SEQUENCE [LARGE SCALE GENOMIC DNA]</scope>
</reference>
<feature type="chain" id="PRO_0000362916" description="ATP synthase subunit c, chloroplastic">
    <location>
        <begin position="1"/>
        <end position="81"/>
    </location>
</feature>
<feature type="transmembrane region" description="Helical" evidence="1">
    <location>
        <begin position="3"/>
        <end position="23"/>
    </location>
</feature>
<feature type="transmembrane region" description="Helical" evidence="1">
    <location>
        <begin position="57"/>
        <end position="77"/>
    </location>
</feature>
<feature type="site" description="Reversibly protonated during proton transport" evidence="1">
    <location>
        <position position="61"/>
    </location>
</feature>
<organism>
    <name type="scientific">Fagopyrum esculentum subsp. ancestrale</name>
    <name type="common">Wild buckwheat</name>
    <dbReference type="NCBI Taxonomy" id="180217"/>
    <lineage>
        <taxon>Eukaryota</taxon>
        <taxon>Viridiplantae</taxon>
        <taxon>Streptophyta</taxon>
        <taxon>Embryophyta</taxon>
        <taxon>Tracheophyta</taxon>
        <taxon>Spermatophyta</taxon>
        <taxon>Magnoliopsida</taxon>
        <taxon>eudicotyledons</taxon>
        <taxon>Gunneridae</taxon>
        <taxon>Pentapetalae</taxon>
        <taxon>Caryophyllales</taxon>
        <taxon>Polygonaceae</taxon>
        <taxon>Polygonoideae</taxon>
        <taxon>Fagopyreae</taxon>
        <taxon>Fagopyrum</taxon>
    </lineage>
</organism>
<dbReference type="EMBL" id="EU254477">
    <property type="protein sequence ID" value="ABY79719.1"/>
    <property type="molecule type" value="Genomic_DNA"/>
</dbReference>
<dbReference type="RefSeq" id="YP_001936504.1">
    <property type="nucleotide sequence ID" value="NC_010776.1"/>
</dbReference>
<dbReference type="SMR" id="B2XWN6"/>
<dbReference type="GeneID" id="6336011"/>
<dbReference type="GO" id="GO:0009535">
    <property type="term" value="C:chloroplast thylakoid membrane"/>
    <property type="evidence" value="ECO:0007669"/>
    <property type="project" value="UniProtKB-SubCell"/>
</dbReference>
<dbReference type="GO" id="GO:0045259">
    <property type="term" value="C:proton-transporting ATP synthase complex"/>
    <property type="evidence" value="ECO:0007669"/>
    <property type="project" value="UniProtKB-KW"/>
</dbReference>
<dbReference type="GO" id="GO:0033177">
    <property type="term" value="C:proton-transporting two-sector ATPase complex, proton-transporting domain"/>
    <property type="evidence" value="ECO:0007669"/>
    <property type="project" value="InterPro"/>
</dbReference>
<dbReference type="GO" id="GO:0008289">
    <property type="term" value="F:lipid binding"/>
    <property type="evidence" value="ECO:0007669"/>
    <property type="project" value="UniProtKB-KW"/>
</dbReference>
<dbReference type="GO" id="GO:0046933">
    <property type="term" value="F:proton-transporting ATP synthase activity, rotational mechanism"/>
    <property type="evidence" value="ECO:0007669"/>
    <property type="project" value="UniProtKB-UniRule"/>
</dbReference>
<dbReference type="CDD" id="cd18183">
    <property type="entry name" value="ATP-synt_Fo_c_ATPH"/>
    <property type="match status" value="1"/>
</dbReference>
<dbReference type="FunFam" id="1.20.20.10:FF:000001">
    <property type="entry name" value="ATP synthase subunit c, chloroplastic"/>
    <property type="match status" value="1"/>
</dbReference>
<dbReference type="Gene3D" id="1.20.20.10">
    <property type="entry name" value="F1F0 ATP synthase subunit C"/>
    <property type="match status" value="1"/>
</dbReference>
<dbReference type="HAMAP" id="MF_01396">
    <property type="entry name" value="ATP_synth_c_bact"/>
    <property type="match status" value="1"/>
</dbReference>
<dbReference type="InterPro" id="IPR005953">
    <property type="entry name" value="ATP_synth_csu_bac/chlpt"/>
</dbReference>
<dbReference type="InterPro" id="IPR000454">
    <property type="entry name" value="ATP_synth_F0_csu"/>
</dbReference>
<dbReference type="InterPro" id="IPR020537">
    <property type="entry name" value="ATP_synth_F0_csu_DDCD_BS"/>
</dbReference>
<dbReference type="InterPro" id="IPR038662">
    <property type="entry name" value="ATP_synth_F0_csu_sf"/>
</dbReference>
<dbReference type="InterPro" id="IPR002379">
    <property type="entry name" value="ATPase_proteolipid_c-like_dom"/>
</dbReference>
<dbReference type="InterPro" id="IPR035921">
    <property type="entry name" value="F/V-ATP_Csub_sf"/>
</dbReference>
<dbReference type="NCBIfam" id="TIGR01260">
    <property type="entry name" value="ATP_synt_c"/>
    <property type="match status" value="1"/>
</dbReference>
<dbReference type="NCBIfam" id="NF005608">
    <property type="entry name" value="PRK07354.1"/>
    <property type="match status" value="1"/>
</dbReference>
<dbReference type="PANTHER" id="PTHR10031">
    <property type="entry name" value="ATP SYNTHASE LIPID-BINDING PROTEIN, MITOCHONDRIAL"/>
    <property type="match status" value="1"/>
</dbReference>
<dbReference type="PANTHER" id="PTHR10031:SF0">
    <property type="entry name" value="ATPASE PROTEIN 9"/>
    <property type="match status" value="1"/>
</dbReference>
<dbReference type="Pfam" id="PF00137">
    <property type="entry name" value="ATP-synt_C"/>
    <property type="match status" value="1"/>
</dbReference>
<dbReference type="PRINTS" id="PR00124">
    <property type="entry name" value="ATPASEC"/>
</dbReference>
<dbReference type="SUPFAM" id="SSF81333">
    <property type="entry name" value="F1F0 ATP synthase subunit C"/>
    <property type="match status" value="1"/>
</dbReference>
<dbReference type="PROSITE" id="PS00605">
    <property type="entry name" value="ATPASE_C"/>
    <property type="match status" value="1"/>
</dbReference>
<evidence type="ECO:0000255" key="1">
    <source>
        <dbReference type="HAMAP-Rule" id="MF_01396"/>
    </source>
</evidence>
<gene>
    <name evidence="1" type="primary">atpH</name>
</gene>
<keyword id="KW-0066">ATP synthesis</keyword>
<keyword id="KW-0138">CF(0)</keyword>
<keyword id="KW-0150">Chloroplast</keyword>
<keyword id="KW-0375">Hydrogen ion transport</keyword>
<keyword id="KW-0406">Ion transport</keyword>
<keyword id="KW-0446">Lipid-binding</keyword>
<keyword id="KW-0472">Membrane</keyword>
<keyword id="KW-0934">Plastid</keyword>
<keyword id="KW-0793">Thylakoid</keyword>
<keyword id="KW-0812">Transmembrane</keyword>
<keyword id="KW-1133">Transmembrane helix</keyword>
<keyword id="KW-0813">Transport</keyword>
<accession>B2XWN6</accession>
<comment type="function">
    <text evidence="1">F(1)F(0) ATP synthase produces ATP from ADP in the presence of a proton or sodium gradient. F-type ATPases consist of two structural domains, F(1) containing the extramembraneous catalytic core and F(0) containing the membrane proton channel, linked together by a central stalk and a peripheral stalk. During catalysis, ATP synthesis in the catalytic domain of F(1) is coupled via a rotary mechanism of the central stalk subunits to proton translocation.</text>
</comment>
<comment type="function">
    <text evidence="1">Key component of the F(0) channel; it plays a direct role in translocation across the membrane. A homomeric c-ring of between 10-14 subunits forms the central stalk rotor element with the F(1) delta and epsilon subunits.</text>
</comment>
<comment type="subunit">
    <text evidence="1">F-type ATPases have 2 components, F(1) - the catalytic core - and F(0) - the membrane proton channel. F(1) has five subunits: alpha(3), beta(3), gamma(1), delta(1), epsilon(1). F(0) has four main subunits: a(1), b(1), b'(1) and c(10-14). The alpha and beta chains form an alternating ring which encloses part of the gamma chain. F(1) is attached to F(0) by a central stalk formed by the gamma and epsilon chains, while a peripheral stalk is formed by the delta, b and b' chains.</text>
</comment>
<comment type="subcellular location">
    <subcellularLocation>
        <location evidence="1">Plastid</location>
        <location evidence="1">Chloroplast thylakoid membrane</location>
        <topology evidence="1">Multi-pass membrane protein</topology>
    </subcellularLocation>
</comment>
<comment type="miscellaneous">
    <text>In plastids the F-type ATPase is also known as CF(1)CF(0).</text>
</comment>
<comment type="similarity">
    <text evidence="1">Belongs to the ATPase C chain family.</text>
</comment>
<protein>
    <recommendedName>
        <fullName evidence="1">ATP synthase subunit c, chloroplastic</fullName>
    </recommendedName>
    <alternativeName>
        <fullName evidence="1">ATP synthase F(0) sector subunit c</fullName>
    </alternativeName>
    <alternativeName>
        <fullName evidence="1">ATPase subunit III</fullName>
    </alternativeName>
    <alternativeName>
        <fullName evidence="1">F-type ATPase subunit c</fullName>
        <shortName evidence="1">F-ATPase subunit c</shortName>
    </alternativeName>
    <alternativeName>
        <fullName evidence="1">Lipid-binding protein</fullName>
    </alternativeName>
</protein>
<proteinExistence type="inferred from homology"/>
<sequence>MNPLISAASVIAAGLAVGLASIGPGVGQGTAAGQAVEGIARQPEAEGKIRGTLLLSLAFMEALTIYGLVVALALLFANPFV</sequence>